<sequence length="178" mass="20878">MSMNSNVYVAKLGKTVGLQGHLRLFIDSDFPEQFKKGVTFTTNRNLQLKVLEYNSSRELVKFENYEDVELAKKLTNQELYATIEQTKENCKLAKNEFFWFDLISCEVFENNLKLGTVKEIHRYPLNDYLEIITDSELVKKALPKNFLIPHIFDKFILNIDIENKRIDVINSFDILENS</sequence>
<feature type="chain" id="PRO_0000321713" description="Ribosome maturation factor RimM">
    <location>
        <begin position="1"/>
        <end position="178"/>
    </location>
</feature>
<feature type="domain" description="PRC barrel" evidence="1">
    <location>
        <begin position="94"/>
        <end position="174"/>
    </location>
</feature>
<name>RIMM_ALIB4</name>
<evidence type="ECO:0000255" key="1">
    <source>
        <dbReference type="HAMAP-Rule" id="MF_00014"/>
    </source>
</evidence>
<organism>
    <name type="scientific">Aliarcobacter butzleri (strain RM4018)</name>
    <name type="common">Arcobacter butzleri</name>
    <dbReference type="NCBI Taxonomy" id="367737"/>
    <lineage>
        <taxon>Bacteria</taxon>
        <taxon>Pseudomonadati</taxon>
        <taxon>Campylobacterota</taxon>
        <taxon>Epsilonproteobacteria</taxon>
        <taxon>Campylobacterales</taxon>
        <taxon>Arcobacteraceae</taxon>
        <taxon>Aliarcobacter</taxon>
    </lineage>
</organism>
<comment type="function">
    <text evidence="1">An accessory protein needed during the final step in the assembly of 30S ribosomal subunit, possibly for assembly of the head region. Essential for efficient processing of 16S rRNA. May be needed both before and after RbfA during the maturation of 16S rRNA. It has affinity for free ribosomal 30S subunits but not for 70S ribosomes.</text>
</comment>
<comment type="subunit">
    <text evidence="1">Binds ribosomal protein uS19.</text>
</comment>
<comment type="subcellular location">
    <subcellularLocation>
        <location evidence="1">Cytoplasm</location>
    </subcellularLocation>
</comment>
<comment type="domain">
    <text evidence="1">The PRC barrel domain binds ribosomal protein uS19.</text>
</comment>
<comment type="similarity">
    <text evidence="1">Belongs to the RimM family.</text>
</comment>
<accession>A8EW70</accession>
<keyword id="KW-0143">Chaperone</keyword>
<keyword id="KW-0963">Cytoplasm</keyword>
<keyword id="KW-1185">Reference proteome</keyword>
<keyword id="KW-0690">Ribosome biogenesis</keyword>
<keyword id="KW-0698">rRNA processing</keyword>
<gene>
    <name evidence="1" type="primary">rimM</name>
    <name type="ordered locus">Abu_1971</name>
</gene>
<proteinExistence type="inferred from homology"/>
<reference key="1">
    <citation type="journal article" date="2007" name="PLoS ONE">
        <title>The complete genome sequence and analysis of the Epsilonproteobacterium Arcobacter butzleri.</title>
        <authorList>
            <person name="Miller W.G."/>
            <person name="Parker C.T."/>
            <person name="Rubenfield M."/>
            <person name="Mendz G.L."/>
            <person name="Woesten M.M.S.M."/>
            <person name="Ussery D.W."/>
            <person name="Stolz J.F."/>
            <person name="Binnewies T.T."/>
            <person name="Hallin P.F."/>
            <person name="Wang G."/>
            <person name="Malek J.A."/>
            <person name="Rogosin A."/>
            <person name="Stanker L.H."/>
            <person name="Mandrell R.E."/>
        </authorList>
    </citation>
    <scope>NUCLEOTIDE SEQUENCE [LARGE SCALE GENOMIC DNA]</scope>
    <source>
        <strain>RM4018</strain>
    </source>
</reference>
<dbReference type="EMBL" id="CP000361">
    <property type="protein sequence ID" value="ABV68193.1"/>
    <property type="molecule type" value="Genomic_DNA"/>
</dbReference>
<dbReference type="RefSeq" id="WP_012147872.1">
    <property type="nucleotide sequence ID" value="NC_009850.1"/>
</dbReference>
<dbReference type="SMR" id="A8EW70"/>
<dbReference type="STRING" id="367737.Abu_1971"/>
<dbReference type="GeneID" id="24304899"/>
<dbReference type="KEGG" id="abu:Abu_1971"/>
<dbReference type="eggNOG" id="COG0806">
    <property type="taxonomic scope" value="Bacteria"/>
</dbReference>
<dbReference type="HOGENOM" id="CLU_077636_2_0_7"/>
<dbReference type="Proteomes" id="UP000001136">
    <property type="component" value="Chromosome"/>
</dbReference>
<dbReference type="GO" id="GO:0005737">
    <property type="term" value="C:cytoplasm"/>
    <property type="evidence" value="ECO:0007669"/>
    <property type="project" value="UniProtKB-SubCell"/>
</dbReference>
<dbReference type="GO" id="GO:0005840">
    <property type="term" value="C:ribosome"/>
    <property type="evidence" value="ECO:0007669"/>
    <property type="project" value="InterPro"/>
</dbReference>
<dbReference type="GO" id="GO:0043022">
    <property type="term" value="F:ribosome binding"/>
    <property type="evidence" value="ECO:0007669"/>
    <property type="project" value="InterPro"/>
</dbReference>
<dbReference type="GO" id="GO:0042274">
    <property type="term" value="P:ribosomal small subunit biogenesis"/>
    <property type="evidence" value="ECO:0007669"/>
    <property type="project" value="UniProtKB-UniRule"/>
</dbReference>
<dbReference type="GO" id="GO:0006364">
    <property type="term" value="P:rRNA processing"/>
    <property type="evidence" value="ECO:0007669"/>
    <property type="project" value="UniProtKB-UniRule"/>
</dbReference>
<dbReference type="Gene3D" id="2.30.30.240">
    <property type="entry name" value="PRC-barrel domain"/>
    <property type="match status" value="1"/>
</dbReference>
<dbReference type="Gene3D" id="2.40.30.60">
    <property type="entry name" value="RimM"/>
    <property type="match status" value="1"/>
</dbReference>
<dbReference type="HAMAP" id="MF_00014">
    <property type="entry name" value="Ribosome_mat_RimM"/>
    <property type="match status" value="1"/>
</dbReference>
<dbReference type="InterPro" id="IPR011033">
    <property type="entry name" value="PRC_barrel-like_sf"/>
</dbReference>
<dbReference type="InterPro" id="IPR056792">
    <property type="entry name" value="PRC_RimM"/>
</dbReference>
<dbReference type="InterPro" id="IPR011961">
    <property type="entry name" value="RimM"/>
</dbReference>
<dbReference type="InterPro" id="IPR002676">
    <property type="entry name" value="RimM_N"/>
</dbReference>
<dbReference type="InterPro" id="IPR036976">
    <property type="entry name" value="RimM_N_sf"/>
</dbReference>
<dbReference type="InterPro" id="IPR009000">
    <property type="entry name" value="Transl_B-barrel_sf"/>
</dbReference>
<dbReference type="NCBIfam" id="TIGR02273">
    <property type="entry name" value="16S_RimM"/>
    <property type="match status" value="1"/>
</dbReference>
<dbReference type="PANTHER" id="PTHR33692">
    <property type="entry name" value="RIBOSOME MATURATION FACTOR RIMM"/>
    <property type="match status" value="1"/>
</dbReference>
<dbReference type="PANTHER" id="PTHR33692:SF1">
    <property type="entry name" value="RIBOSOME MATURATION FACTOR RIMM"/>
    <property type="match status" value="1"/>
</dbReference>
<dbReference type="Pfam" id="PF24986">
    <property type="entry name" value="PRC_RimM"/>
    <property type="match status" value="1"/>
</dbReference>
<dbReference type="Pfam" id="PF01782">
    <property type="entry name" value="RimM"/>
    <property type="match status" value="1"/>
</dbReference>
<dbReference type="SUPFAM" id="SSF50346">
    <property type="entry name" value="PRC-barrel domain"/>
    <property type="match status" value="1"/>
</dbReference>
<dbReference type="SUPFAM" id="SSF50447">
    <property type="entry name" value="Translation proteins"/>
    <property type="match status" value="1"/>
</dbReference>
<protein>
    <recommendedName>
        <fullName evidence="1">Ribosome maturation factor RimM</fullName>
    </recommendedName>
</protein>